<keyword id="KW-0238">DNA-binding</keyword>
<keyword id="KW-0536">Nodulation</keyword>
<keyword id="KW-0614">Plasmid</keyword>
<keyword id="KW-1185">Reference proteome</keyword>
<keyword id="KW-0678">Repressor</keyword>
<keyword id="KW-0804">Transcription</keyword>
<keyword id="KW-0805">Transcription regulation</keyword>
<evidence type="ECO:0000255" key="1">
    <source>
        <dbReference type="PROSITE-ProRule" id="PRU00253"/>
    </source>
</evidence>
<evidence type="ECO:0000305" key="2"/>
<accession>P55700</accession>
<sequence length="312" mass="35283">MRFKGLDLNLLVALDALMTKRSVTAAARSINLSQPAMSAAIARLRTYFGDDLFTMRGRELIPTPRAIALAPAVRDALLHIQFSIISWDMFNPVQSERRFRIRLSDVMMLVFFERVVKRLAREAPGIGFELLPLTEDPDELLRYGDVDFVILPELFASSDHPKAKLLDDTLVCVGCPTNKQLKRQLSFENYGSMGHIAAKFGRTLKPSIENWLLLEHGLKRRIEVVVPGFSLIPPLLSGTDRIATMPLRLVEHFAKTTPLRVAELPLALPPFAQAVQWPSLHNRDQASIWMRQVLLQEALHMTAPRDSVEYRP</sequence>
<reference key="1">
    <citation type="journal article" date="1997" name="Nature">
        <title>Molecular basis of symbiosis between Rhizobium and legumes.</title>
        <authorList>
            <person name="Freiberg C.A."/>
            <person name="Fellay R."/>
            <person name="Bairoch A."/>
            <person name="Broughton W.J."/>
            <person name="Rosenthal A."/>
            <person name="Perret X."/>
        </authorList>
    </citation>
    <scope>NUCLEOTIDE SEQUENCE [LARGE SCALE GENOMIC DNA]</scope>
    <source>
        <strain>NBRC 101917 / NGR234</strain>
    </source>
</reference>
<reference key="2">
    <citation type="journal article" date="2009" name="Appl. Environ. Microbiol.">
        <title>Rhizobium sp. strain NGR234 possesses a remarkable number of secretion systems.</title>
        <authorList>
            <person name="Schmeisser C."/>
            <person name="Liesegang H."/>
            <person name="Krysciak D."/>
            <person name="Bakkou N."/>
            <person name="Le Quere A."/>
            <person name="Wollherr A."/>
            <person name="Heinemeyer I."/>
            <person name="Morgenstern B."/>
            <person name="Pommerening-Roeser A."/>
            <person name="Flores M."/>
            <person name="Palacios R."/>
            <person name="Brenner S."/>
            <person name="Gottschalk G."/>
            <person name="Schmitz R.A."/>
            <person name="Broughton W.J."/>
            <person name="Perret X."/>
            <person name="Strittmatter A.W."/>
            <person name="Streit W.R."/>
        </authorList>
    </citation>
    <scope>NUCLEOTIDE SEQUENCE [LARGE SCALE GENOMIC DNA]</scope>
    <source>
        <strain>NBRC 101917 / NGR234</strain>
    </source>
</reference>
<reference key="3">
    <citation type="journal article" date="1998" name="Mol. Microbiol.">
        <title>nodD2 of Rhizobium sp. NGR234 is involved in the repression of the nodABC operon.</title>
        <authorList>
            <person name="Fellay R."/>
            <person name="Hanin M."/>
            <person name="Montorzi G."/>
            <person name="Frey J."/>
            <person name="Freiberg C."/>
            <person name="Golinowski W."/>
            <person name="Staehelin C."/>
            <person name="Broughton W.J."/>
            <person name="Jabbouri S."/>
        </authorList>
    </citation>
    <scope>CHARACTERIZATION</scope>
</reference>
<gene>
    <name type="primary">nodD2</name>
    <name type="ordered locus">NGR_a00810</name>
    <name type="ORF">y4xH</name>
</gene>
<protein>
    <recommendedName>
        <fullName>Nodulation protein D 2</fullName>
    </recommendedName>
</protein>
<organism>
    <name type="scientific">Sinorhizobium fredii (strain NBRC 101917 / NGR234)</name>
    <dbReference type="NCBI Taxonomy" id="394"/>
    <lineage>
        <taxon>Bacteria</taxon>
        <taxon>Pseudomonadati</taxon>
        <taxon>Pseudomonadota</taxon>
        <taxon>Alphaproteobacteria</taxon>
        <taxon>Hyphomicrobiales</taxon>
        <taxon>Rhizobiaceae</taxon>
        <taxon>Sinorhizobium/Ensifer group</taxon>
        <taxon>Sinorhizobium</taxon>
    </lineage>
</organism>
<proteinExistence type="evidence at protein level"/>
<feature type="chain" id="PRO_0000105722" description="Nodulation protein D 2">
    <location>
        <begin position="1"/>
        <end position="312"/>
    </location>
</feature>
<feature type="domain" description="HTH lysR-type" evidence="1">
    <location>
        <begin position="6"/>
        <end position="63"/>
    </location>
</feature>
<feature type="DNA-binding region" description="H-T-H motif" evidence="1">
    <location>
        <begin position="23"/>
        <end position="42"/>
    </location>
</feature>
<name>NODD2_SINFN</name>
<comment type="function">
    <text>Represses the expression of the nodABCIJ-nolO-noeI operon.</text>
</comment>
<comment type="induction">
    <text>By flavonoids.</text>
</comment>
<comment type="similarity">
    <text evidence="2">Belongs to the LysR transcriptional regulatory family.</text>
</comment>
<geneLocation type="plasmid">
    <name>sym pNGR234a</name>
</geneLocation>
<dbReference type="EMBL" id="U00090">
    <property type="protein sequence ID" value="AAB91931.1"/>
    <property type="molecule type" value="Genomic_DNA"/>
</dbReference>
<dbReference type="PIR" id="T10836">
    <property type="entry name" value="T10836"/>
</dbReference>
<dbReference type="RefSeq" id="NP_444144.1">
    <property type="nucleotide sequence ID" value="NC_000914.2"/>
</dbReference>
<dbReference type="RefSeq" id="WP_010875122.1">
    <property type="nucleotide sequence ID" value="NC_000914.2"/>
</dbReference>
<dbReference type="SMR" id="P55700"/>
<dbReference type="KEGG" id="rhi:NGR_a00810"/>
<dbReference type="PATRIC" id="fig|394.7.peg.71"/>
<dbReference type="eggNOG" id="COG0583">
    <property type="taxonomic scope" value="Bacteria"/>
</dbReference>
<dbReference type="HOGENOM" id="CLU_039613_39_0_5"/>
<dbReference type="OrthoDB" id="8339333at2"/>
<dbReference type="Proteomes" id="UP000001054">
    <property type="component" value="Plasmid pNGR234a"/>
</dbReference>
<dbReference type="GO" id="GO:0003677">
    <property type="term" value="F:DNA binding"/>
    <property type="evidence" value="ECO:0007669"/>
    <property type="project" value="UniProtKB-KW"/>
</dbReference>
<dbReference type="GO" id="GO:0003700">
    <property type="term" value="F:DNA-binding transcription factor activity"/>
    <property type="evidence" value="ECO:0007669"/>
    <property type="project" value="InterPro"/>
</dbReference>
<dbReference type="CDD" id="cd08462">
    <property type="entry name" value="PBP2_NodD"/>
    <property type="match status" value="1"/>
</dbReference>
<dbReference type="Gene3D" id="3.40.190.10">
    <property type="entry name" value="Periplasmic binding protein-like II"/>
    <property type="match status" value="2"/>
</dbReference>
<dbReference type="Gene3D" id="1.10.10.10">
    <property type="entry name" value="Winged helix-like DNA-binding domain superfamily/Winged helix DNA-binding domain"/>
    <property type="match status" value="1"/>
</dbReference>
<dbReference type="InterPro" id="IPR050389">
    <property type="entry name" value="LysR-type_TF"/>
</dbReference>
<dbReference type="InterPro" id="IPR005119">
    <property type="entry name" value="LysR_subst-bd"/>
</dbReference>
<dbReference type="InterPro" id="IPR037416">
    <property type="entry name" value="NodD_PBP2"/>
</dbReference>
<dbReference type="InterPro" id="IPR000847">
    <property type="entry name" value="Tscrpt_reg_HTH_LysR"/>
</dbReference>
<dbReference type="InterPro" id="IPR036388">
    <property type="entry name" value="WH-like_DNA-bd_sf"/>
</dbReference>
<dbReference type="InterPro" id="IPR036390">
    <property type="entry name" value="WH_DNA-bd_sf"/>
</dbReference>
<dbReference type="PANTHER" id="PTHR30118:SF6">
    <property type="entry name" value="HTH-TYPE TRANSCRIPTIONAL REGULATOR LEUO"/>
    <property type="match status" value="1"/>
</dbReference>
<dbReference type="PANTHER" id="PTHR30118">
    <property type="entry name" value="HTH-TYPE TRANSCRIPTIONAL REGULATOR LEUO-RELATED"/>
    <property type="match status" value="1"/>
</dbReference>
<dbReference type="Pfam" id="PF00126">
    <property type="entry name" value="HTH_1"/>
    <property type="match status" value="1"/>
</dbReference>
<dbReference type="Pfam" id="PF03466">
    <property type="entry name" value="LysR_substrate"/>
    <property type="match status" value="1"/>
</dbReference>
<dbReference type="PRINTS" id="PR00039">
    <property type="entry name" value="HTHLYSR"/>
</dbReference>
<dbReference type="SUPFAM" id="SSF53850">
    <property type="entry name" value="Periplasmic binding protein-like II"/>
    <property type="match status" value="1"/>
</dbReference>
<dbReference type="SUPFAM" id="SSF46785">
    <property type="entry name" value="Winged helix' DNA-binding domain"/>
    <property type="match status" value="1"/>
</dbReference>
<dbReference type="PROSITE" id="PS50931">
    <property type="entry name" value="HTH_LYSR"/>
    <property type="match status" value="1"/>
</dbReference>